<evidence type="ECO:0000255" key="1">
    <source>
        <dbReference type="HAMAP-Rule" id="MF_00583"/>
    </source>
</evidence>
<organism>
    <name type="scientific">Halobacterium salinarum (strain ATCC 29341 / DSM 671 / R1)</name>
    <dbReference type="NCBI Taxonomy" id="478009"/>
    <lineage>
        <taxon>Archaea</taxon>
        <taxon>Methanobacteriati</taxon>
        <taxon>Methanobacteriota</taxon>
        <taxon>Stenosarchaea group</taxon>
        <taxon>Halobacteria</taxon>
        <taxon>Halobacteriales</taxon>
        <taxon>Halobacteriaceae</taxon>
        <taxon>Halobacterium</taxon>
        <taxon>Halobacterium salinarum NRC-34001</taxon>
    </lineage>
</organism>
<name>KPRS_HALS3</name>
<accession>B0R7B4</accession>
<keyword id="KW-0067">ATP-binding</keyword>
<keyword id="KW-0963">Cytoplasm</keyword>
<keyword id="KW-0418">Kinase</keyword>
<keyword id="KW-0460">Magnesium</keyword>
<keyword id="KW-0479">Metal-binding</keyword>
<keyword id="KW-0545">Nucleotide biosynthesis</keyword>
<keyword id="KW-0547">Nucleotide-binding</keyword>
<keyword id="KW-0808">Transferase</keyword>
<dbReference type="EC" id="2.7.6.1" evidence="1"/>
<dbReference type="EMBL" id="AM774415">
    <property type="protein sequence ID" value="CAP14633.1"/>
    <property type="molecule type" value="Genomic_DNA"/>
</dbReference>
<dbReference type="RefSeq" id="WP_010903634.1">
    <property type="nucleotide sequence ID" value="NC_010364.1"/>
</dbReference>
<dbReference type="SMR" id="B0R7B4"/>
<dbReference type="EnsemblBacteria" id="CAP14633">
    <property type="protein sequence ID" value="CAP14633"/>
    <property type="gene ID" value="OE_4085R"/>
</dbReference>
<dbReference type="KEGG" id="hsl:OE_4085R"/>
<dbReference type="HOGENOM" id="CLU_033546_2_2_2"/>
<dbReference type="PhylomeDB" id="B0R7B4"/>
<dbReference type="UniPathway" id="UPA00087">
    <property type="reaction ID" value="UER00172"/>
</dbReference>
<dbReference type="Proteomes" id="UP000001321">
    <property type="component" value="Chromosome"/>
</dbReference>
<dbReference type="GO" id="GO:0005737">
    <property type="term" value="C:cytoplasm"/>
    <property type="evidence" value="ECO:0007669"/>
    <property type="project" value="UniProtKB-SubCell"/>
</dbReference>
<dbReference type="GO" id="GO:0002189">
    <property type="term" value="C:ribose phosphate diphosphokinase complex"/>
    <property type="evidence" value="ECO:0007669"/>
    <property type="project" value="TreeGrafter"/>
</dbReference>
<dbReference type="GO" id="GO:0005524">
    <property type="term" value="F:ATP binding"/>
    <property type="evidence" value="ECO:0007669"/>
    <property type="project" value="UniProtKB-KW"/>
</dbReference>
<dbReference type="GO" id="GO:0016301">
    <property type="term" value="F:kinase activity"/>
    <property type="evidence" value="ECO:0007669"/>
    <property type="project" value="UniProtKB-KW"/>
</dbReference>
<dbReference type="GO" id="GO:0000287">
    <property type="term" value="F:magnesium ion binding"/>
    <property type="evidence" value="ECO:0007669"/>
    <property type="project" value="UniProtKB-UniRule"/>
</dbReference>
<dbReference type="GO" id="GO:0004749">
    <property type="term" value="F:ribose phosphate diphosphokinase activity"/>
    <property type="evidence" value="ECO:0007669"/>
    <property type="project" value="UniProtKB-UniRule"/>
</dbReference>
<dbReference type="GO" id="GO:0006015">
    <property type="term" value="P:5-phosphoribose 1-diphosphate biosynthetic process"/>
    <property type="evidence" value="ECO:0007669"/>
    <property type="project" value="UniProtKB-UniRule"/>
</dbReference>
<dbReference type="GO" id="GO:0006164">
    <property type="term" value="P:purine nucleotide biosynthetic process"/>
    <property type="evidence" value="ECO:0007669"/>
    <property type="project" value="TreeGrafter"/>
</dbReference>
<dbReference type="CDD" id="cd06223">
    <property type="entry name" value="PRTases_typeI"/>
    <property type="match status" value="1"/>
</dbReference>
<dbReference type="FunFam" id="3.40.50.2020:FF:000007">
    <property type="entry name" value="Ribose-phosphate pyrophosphokinase"/>
    <property type="match status" value="1"/>
</dbReference>
<dbReference type="Gene3D" id="3.40.50.2020">
    <property type="match status" value="2"/>
</dbReference>
<dbReference type="HAMAP" id="MF_00583_A">
    <property type="entry name" value="RibP_PPkinase_A"/>
    <property type="match status" value="1"/>
</dbReference>
<dbReference type="InterPro" id="IPR029099">
    <property type="entry name" value="Pribosyltran_N"/>
</dbReference>
<dbReference type="InterPro" id="IPR000836">
    <property type="entry name" value="PRibTrfase_dom"/>
</dbReference>
<dbReference type="InterPro" id="IPR029057">
    <property type="entry name" value="PRTase-like"/>
</dbReference>
<dbReference type="InterPro" id="IPR005946">
    <property type="entry name" value="Rib-P_diPkinase"/>
</dbReference>
<dbReference type="InterPro" id="IPR037514">
    <property type="entry name" value="Rib-P_diPkinase_arc"/>
</dbReference>
<dbReference type="NCBIfam" id="TIGR01251">
    <property type="entry name" value="ribP_PPkin"/>
    <property type="match status" value="1"/>
</dbReference>
<dbReference type="PANTHER" id="PTHR10210">
    <property type="entry name" value="RIBOSE-PHOSPHATE DIPHOSPHOKINASE FAMILY MEMBER"/>
    <property type="match status" value="1"/>
</dbReference>
<dbReference type="PANTHER" id="PTHR10210:SF32">
    <property type="entry name" value="RIBOSE-PHOSPHATE PYROPHOSPHOKINASE 2"/>
    <property type="match status" value="1"/>
</dbReference>
<dbReference type="Pfam" id="PF00156">
    <property type="entry name" value="Pribosyltran"/>
    <property type="match status" value="1"/>
</dbReference>
<dbReference type="Pfam" id="PF13793">
    <property type="entry name" value="Pribosyltran_N"/>
    <property type="match status" value="1"/>
</dbReference>
<dbReference type="SMART" id="SM01400">
    <property type="entry name" value="Pribosyltran_N"/>
    <property type="match status" value="1"/>
</dbReference>
<dbReference type="SUPFAM" id="SSF53271">
    <property type="entry name" value="PRTase-like"/>
    <property type="match status" value="2"/>
</dbReference>
<reference key="1">
    <citation type="journal article" date="2008" name="Genomics">
        <title>Evolution in the laboratory: the genome of Halobacterium salinarum strain R1 compared to that of strain NRC-1.</title>
        <authorList>
            <person name="Pfeiffer F."/>
            <person name="Schuster S.C."/>
            <person name="Broicher A."/>
            <person name="Falb M."/>
            <person name="Palm P."/>
            <person name="Rodewald K."/>
            <person name="Ruepp A."/>
            <person name="Soppa J."/>
            <person name="Tittor J."/>
            <person name="Oesterhelt D."/>
        </authorList>
    </citation>
    <scope>NUCLEOTIDE SEQUENCE [LARGE SCALE GENOMIC DNA]</scope>
    <source>
        <strain>ATCC 29341 / DSM 671 / R1</strain>
    </source>
</reference>
<comment type="function">
    <text evidence="1">Involved in the biosynthesis of the central metabolite phospho-alpha-D-ribosyl-1-pyrophosphate (PRPP) via the transfer of pyrophosphoryl group from ATP to 1-hydroxyl of ribose-5-phosphate (Rib-5-P).</text>
</comment>
<comment type="catalytic activity">
    <reaction evidence="1">
        <text>D-ribose 5-phosphate + ATP = 5-phospho-alpha-D-ribose 1-diphosphate + AMP + H(+)</text>
        <dbReference type="Rhea" id="RHEA:15609"/>
        <dbReference type="ChEBI" id="CHEBI:15378"/>
        <dbReference type="ChEBI" id="CHEBI:30616"/>
        <dbReference type="ChEBI" id="CHEBI:58017"/>
        <dbReference type="ChEBI" id="CHEBI:78346"/>
        <dbReference type="ChEBI" id="CHEBI:456215"/>
        <dbReference type="EC" id="2.7.6.1"/>
    </reaction>
</comment>
<comment type="cofactor">
    <cofactor evidence="1">
        <name>Mg(2+)</name>
        <dbReference type="ChEBI" id="CHEBI:18420"/>
    </cofactor>
    <text evidence="1">Binds 2 Mg(2+) ions per subunit.</text>
</comment>
<comment type="pathway">
    <text evidence="1">Metabolic intermediate biosynthesis; 5-phospho-alpha-D-ribose 1-diphosphate biosynthesis; 5-phospho-alpha-D-ribose 1-diphosphate from D-ribose 5-phosphate (route I): step 1/1.</text>
</comment>
<comment type="subcellular location">
    <subcellularLocation>
        <location evidence="1">Cytoplasm</location>
    </subcellularLocation>
</comment>
<comment type="similarity">
    <text evidence="1">Belongs to the ribose-phosphate pyrophosphokinase family. Class III (archaeal) subfamily.</text>
</comment>
<feature type="chain" id="PRO_1000129774" description="Ribose-phosphate pyrophosphokinase">
    <location>
        <begin position="1"/>
        <end position="281"/>
    </location>
</feature>
<feature type="active site" evidence="1">
    <location>
        <position position="185"/>
    </location>
</feature>
<feature type="binding site" evidence="1">
    <location>
        <begin position="33"/>
        <end position="35"/>
    </location>
    <ligand>
        <name>ATP</name>
        <dbReference type="ChEBI" id="CHEBI:30616"/>
    </ligand>
</feature>
<feature type="binding site" evidence="1">
    <location>
        <begin position="90"/>
        <end position="91"/>
    </location>
    <ligand>
        <name>ATP</name>
        <dbReference type="ChEBI" id="CHEBI:30616"/>
    </ligand>
</feature>
<feature type="binding site" evidence="1">
    <location>
        <position position="123"/>
    </location>
    <ligand>
        <name>Mg(2+)</name>
        <dbReference type="ChEBI" id="CHEBI:18420"/>
        <label>1</label>
    </ligand>
</feature>
<feature type="binding site" evidence="1">
    <location>
        <position position="161"/>
    </location>
    <ligand>
        <name>Mg(2+)</name>
        <dbReference type="ChEBI" id="CHEBI:18420"/>
        <label>2</label>
    </ligand>
</feature>
<feature type="binding site" evidence="1">
    <location>
        <position position="187"/>
    </location>
    <ligand>
        <name>D-ribose 5-phosphate</name>
        <dbReference type="ChEBI" id="CHEBI:78346"/>
    </ligand>
</feature>
<feature type="binding site" evidence="1">
    <location>
        <position position="211"/>
    </location>
    <ligand>
        <name>D-ribose 5-phosphate</name>
        <dbReference type="ChEBI" id="CHEBI:78346"/>
    </ligand>
</feature>
<protein>
    <recommendedName>
        <fullName evidence="1">Ribose-phosphate pyrophosphokinase</fullName>
        <shortName evidence="1">RPPK</shortName>
        <ecNumber evidence="1">2.7.6.1</ecNumber>
    </recommendedName>
    <alternativeName>
        <fullName evidence="1">5-phospho-D-ribosyl alpha-1-diphosphate synthase</fullName>
    </alternativeName>
    <alternativeName>
        <fullName evidence="1">Phosphoribosyl diphosphate synthase</fullName>
    </alternativeName>
    <alternativeName>
        <fullName evidence="1">Phosphoribosyl pyrophosphate synthase</fullName>
        <shortName evidence="1">P-Rib-PP synthase</shortName>
        <shortName evidence="1">PRPP synthase</shortName>
        <shortName evidence="1">PRPPase</shortName>
    </alternativeName>
</protein>
<gene>
    <name evidence="1" type="primary">prs</name>
    <name type="ordered locus">OE_4085R</name>
</gene>
<proteinExistence type="inferred from homology"/>
<sequence length="281" mass="28786">MLLSGSSSQSLAAALAAATGERLGDVTYDSFPDGEQLVTVPPAVDGERAVIVASTPTSDAHIEVLQLQDAARDAGASEIITVLPYMGYARQDDAFDPGQPVSARAVARAISTGTDRVLTVNPHEDGVLECFDVPAAGVDAAPQLAAPLPADLTDPVFLSPDHGATDLATSVRDAYGTGVTDHFQKVRHSGSDVTVEPSEIQTAGRDVVVTDDIVATGTTMSEAITALDDPARVFVATVHPLLAGSARLKLARAGVEAVYGTDTIECAVSEVSAAPAIADAL</sequence>